<sequence>MAAPPSTRLQGMLQTAVQSVQWTYSLFWQLCPQQGILVWGDGYYNGAIKTRKTVLPIEVSAEEASLQRSQQLRELYDSLSAGESNQQTRRPCAALSPEDLTESEWFYLMCVSFSFPPGVGLPGKAYAKRQHVWLTGANEVDSKVFSRAILAKSARVQTVVCIPLLDGVVELGNTERVQEDIGFIHQVKSFFIDHHPPPPPKPALSEHSTSNLATSSVHPRFHSPPLPLTYAPLDPPLIANQIHMEEEQEQEQEEDEDDDDDDDDEEEAESDSEAHTGLNSEAQNPRVDHVARAAAEPSELMQLEMSEDIRLGSPDDGSNNMDPDFQLMVASQGGNPADQQQRVDSFRAESTRRWPLLQDPLGRSLQAPTSGGTGLEELTQDDTHYSQTVSTILQHQSNRWLESSSSSAAGCLMYSSQSSFSKWPLRPSDHHHQADATSQCLLKYILFTVPFLHSKYRDDNNSPKSATAADSASRFRKPTPQDELSANHVLAERRRREKLNERFIILRSLVPFVTKMDKASILGDTIEYVKQLRKNIQDLEARARQIEIDQRSRSSGDPQRSGAKAATDKRKLRIVEASGGAKGKAVDSVAVATPPPPAPPQPVAGVGVQVQVSIIESDALVELQCTHREGLLLDVMVVLRDHRVEVTAVQSSLTNGVFVAELRAKVKENVNGKKPSIVEVKRAIHQIIP</sequence>
<reference key="1">
    <citation type="journal article" date="2019" name="Plant J.">
        <title>A MYB/bHLH complex regulates tissue-specific anthocyanin biosynthesis in the inner pericarp of red-centered kiwifruit Actinidia chinensis cv. Hongyang.</title>
        <authorList>
            <person name="Wang L."/>
            <person name="Tang W."/>
            <person name="Hu Y."/>
            <person name="Zhang Y."/>
            <person name="Sun J."/>
            <person name="Guo X."/>
            <person name="Lu H."/>
            <person name="Yang Y."/>
            <person name="Fang C."/>
            <person name="Niu X."/>
            <person name="Yue J."/>
            <person name="Fei Z."/>
            <person name="Liu Y."/>
        </authorList>
    </citation>
    <scope>NUCLEOTIDE SEQUENCE [MRNA]</scope>
    <scope>FUNCTION</scope>
    <scope>INTERACTION WITH MYB123</scope>
    <scope>SUBCELLULAR LOCATION</scope>
    <scope>TISSUE SPECIFICITY</scope>
</reference>
<reference key="2">
    <citation type="journal article" date="2018" name="BMC Genomics">
        <title>A manually annotated Actinidia chinensis var. chinensis (kiwifruit) genome highlights the challenges associated with draft genomes and gene prediction in plants.</title>
        <authorList>
            <person name="Pilkington S.M."/>
            <person name="Crowhurst R."/>
            <person name="Hilario E."/>
            <person name="Nardozza S."/>
            <person name="Fraser L."/>
            <person name="Peng Y."/>
            <person name="Gunaseelan K."/>
            <person name="Simpson R."/>
            <person name="Tahir J."/>
            <person name="Deroles S.C."/>
            <person name="Templeton K."/>
            <person name="Luo Z."/>
            <person name="Davy M."/>
            <person name="Cheng C."/>
            <person name="McNeilage M."/>
            <person name="Scaglione D."/>
            <person name="Liu Y."/>
            <person name="Zhang Q."/>
            <person name="Datson P."/>
            <person name="De Silva N."/>
            <person name="Gardiner S.E."/>
            <person name="Bassett H."/>
            <person name="Chagne D."/>
            <person name="McCallum J."/>
            <person name="Dzierzon H."/>
            <person name="Deng C."/>
            <person name="Wang Y.Y."/>
            <person name="Barron L."/>
            <person name="Manako K."/>
            <person name="Bowen J."/>
            <person name="Foster T.M."/>
            <person name="Erridge Z.A."/>
            <person name="Tiffin H."/>
            <person name="Waite C.N."/>
            <person name="Davies K.M."/>
            <person name="Grierson E.P."/>
            <person name="Laing W.A."/>
            <person name="Kirk R."/>
            <person name="Chen X."/>
            <person name="Wood M."/>
            <person name="Montefiori M."/>
            <person name="Brummell D.A."/>
            <person name="Schwinn K.E."/>
            <person name="Catanach A."/>
            <person name="Fullerton C."/>
            <person name="Li D."/>
            <person name="Meiyalaghan S."/>
            <person name="Nieuwenhuizen N."/>
            <person name="Read N."/>
            <person name="Prakash R."/>
            <person name="Hunter D."/>
            <person name="Zhang H."/>
            <person name="McKenzie M."/>
            <person name="Knabel M."/>
            <person name="Harris A."/>
            <person name="Allan A.C."/>
            <person name="Gleave A."/>
            <person name="Chen A."/>
            <person name="Janssen B.J."/>
            <person name="Plunkett B."/>
            <person name="Ampomah-Dwamena C."/>
            <person name="Voogd C."/>
            <person name="Leif D."/>
            <person name="Lafferty D."/>
            <person name="Souleyre E.J.F."/>
            <person name="Varkonyi-Gasic E."/>
            <person name="Gambi F."/>
            <person name="Hanley J."/>
            <person name="Yao J.L."/>
            <person name="Cheung J."/>
            <person name="David K.M."/>
            <person name="Warren B."/>
            <person name="Marsh K."/>
            <person name="Snowden K.C."/>
            <person name="Lin-Wang K."/>
            <person name="Brian L."/>
            <person name="Martinez-Sanchez M."/>
            <person name="Wang M."/>
            <person name="Ileperuma N."/>
            <person name="Macnee N."/>
            <person name="Campin R."/>
            <person name="McAtee P."/>
            <person name="Drummond R.S.M."/>
            <person name="Espley R.V."/>
            <person name="Ireland H.S."/>
            <person name="Wu R."/>
            <person name="Atkinson R.G."/>
            <person name="Karunairetnam S."/>
            <person name="Bulley S."/>
            <person name="Chunkath S."/>
            <person name="Hanley Z."/>
            <person name="Storey R."/>
            <person name="Thrimawithana A.H."/>
            <person name="Thomson S."/>
            <person name="David C."/>
            <person name="Testolin R."/>
            <person name="Huang H."/>
            <person name="Hellens R.P."/>
            <person name="Schaffer R.J."/>
        </authorList>
    </citation>
    <scope>NUCLEOTIDE SEQUENCE [LARGE SCALE GENOMIC DNA]</scope>
    <source>
        <strain>cv. Red5</strain>
    </source>
</reference>
<comment type="function">
    <text evidence="3">Transcription activator involved in the spatiotemporal regulation of anthocyanin biosynthesis specifically in the inner pericarp of red-fleshed kiwifruits (PubMed:30912865). Functions in association with MYB123 to activate the promoters of LDOX (ANS) and F3GT1 that encode the dedicated enzymes for anthocyanin biosynthesis (PubMed:30912865).</text>
</comment>
<comment type="subunit">
    <text evidence="3">Interacts with MYB123.</text>
</comment>
<comment type="subcellular location">
    <subcellularLocation>
        <location evidence="1 3">Nucleus</location>
    </subcellularLocation>
</comment>
<comment type="tissue specificity">
    <text evidence="3">Expressed in the inner pericarp of maturing fruits.</text>
</comment>
<comment type="similarity">
    <text>Belongs to the bHLH protein family.</text>
</comment>
<dbReference type="EMBL" id="MH643776">
    <property type="protein sequence ID" value="QAT77714.1"/>
    <property type="molecule type" value="mRNA"/>
</dbReference>
<dbReference type="EMBL" id="NKQK01000017">
    <property type="protein sequence ID" value="PSS06386.1"/>
    <property type="molecule type" value="Genomic_DNA"/>
</dbReference>
<dbReference type="SMR" id="A0A2R6QE26"/>
<dbReference type="FunCoup" id="A0A2R6QE26">
    <property type="interactions" value="332"/>
</dbReference>
<dbReference type="STRING" id="1590841.A0A2R6QE26"/>
<dbReference type="EnsemblPlants" id="PSS06386">
    <property type="protein sequence ID" value="PSS06386"/>
    <property type="gene ID" value="CEY00_Acc19563"/>
</dbReference>
<dbReference type="Gramene" id="PSS06386">
    <property type="protein sequence ID" value="PSS06386"/>
    <property type="gene ID" value="CEY00_Acc19563"/>
</dbReference>
<dbReference type="InParanoid" id="A0A2R6QE26"/>
<dbReference type="OMA" id="IFMDQHG"/>
<dbReference type="OrthoDB" id="690068at2759"/>
<dbReference type="Proteomes" id="UP000241394">
    <property type="component" value="Chromosome LG17"/>
</dbReference>
<dbReference type="GO" id="GO:0005634">
    <property type="term" value="C:nucleus"/>
    <property type="evidence" value="ECO:0000314"/>
    <property type="project" value="UniProtKB"/>
</dbReference>
<dbReference type="GO" id="GO:0003677">
    <property type="term" value="F:DNA binding"/>
    <property type="evidence" value="ECO:0007669"/>
    <property type="project" value="UniProtKB-KW"/>
</dbReference>
<dbReference type="GO" id="GO:0046983">
    <property type="term" value="F:protein dimerization activity"/>
    <property type="evidence" value="ECO:0007669"/>
    <property type="project" value="InterPro"/>
</dbReference>
<dbReference type="GO" id="GO:0031542">
    <property type="term" value="P:positive regulation of anthocyanin biosynthetic process"/>
    <property type="evidence" value="ECO:0000314"/>
    <property type="project" value="UniProtKB"/>
</dbReference>
<dbReference type="GO" id="GO:0045893">
    <property type="term" value="P:positive regulation of DNA-templated transcription"/>
    <property type="evidence" value="ECO:0000314"/>
    <property type="project" value="UniProtKB"/>
</dbReference>
<dbReference type="Gene3D" id="4.10.280.10">
    <property type="entry name" value="Helix-loop-helix DNA-binding domain"/>
    <property type="match status" value="1"/>
</dbReference>
<dbReference type="InterPro" id="IPR054502">
    <property type="entry name" value="bHLH-TF_ACT-like_plant"/>
</dbReference>
<dbReference type="InterPro" id="IPR011598">
    <property type="entry name" value="bHLH_dom"/>
</dbReference>
<dbReference type="InterPro" id="IPR036638">
    <property type="entry name" value="HLH_DNA-bd_sf"/>
</dbReference>
<dbReference type="InterPro" id="IPR025610">
    <property type="entry name" value="MYC/MYB_N"/>
</dbReference>
<dbReference type="PANTHER" id="PTHR46266">
    <property type="entry name" value="TRANSCRIPTION FACTOR TT8"/>
    <property type="match status" value="1"/>
</dbReference>
<dbReference type="PANTHER" id="PTHR46266:SF4">
    <property type="entry name" value="TRANSCRIPTION FACTOR TT8"/>
    <property type="match status" value="1"/>
</dbReference>
<dbReference type="Pfam" id="PF14215">
    <property type="entry name" value="bHLH-MYC_N"/>
    <property type="match status" value="1"/>
</dbReference>
<dbReference type="Pfam" id="PF22754">
    <property type="entry name" value="bHLH-TF_ACT-like_plant"/>
    <property type="match status" value="1"/>
</dbReference>
<dbReference type="Pfam" id="PF00010">
    <property type="entry name" value="HLH"/>
    <property type="match status" value="1"/>
</dbReference>
<dbReference type="SMART" id="SM00353">
    <property type="entry name" value="HLH"/>
    <property type="match status" value="1"/>
</dbReference>
<dbReference type="SUPFAM" id="SSF47459">
    <property type="entry name" value="HLH, helix-loop-helix DNA-binding domain"/>
    <property type="match status" value="1"/>
</dbReference>
<dbReference type="PROSITE" id="PS50888">
    <property type="entry name" value="BHLH"/>
    <property type="match status" value="1"/>
</dbReference>
<accession>A0A2R6QE26</accession>
<accession>A0A410R938</accession>
<proteinExistence type="evidence at protein level"/>
<organism>
    <name type="scientific">Actinidia chinensis var. chinensis</name>
    <name type="common">Chinese soft-hair kiwi</name>
    <dbReference type="NCBI Taxonomy" id="1590841"/>
    <lineage>
        <taxon>Eukaryota</taxon>
        <taxon>Viridiplantae</taxon>
        <taxon>Streptophyta</taxon>
        <taxon>Embryophyta</taxon>
        <taxon>Tracheophyta</taxon>
        <taxon>Spermatophyta</taxon>
        <taxon>Magnoliopsida</taxon>
        <taxon>eudicotyledons</taxon>
        <taxon>Gunneridae</taxon>
        <taxon>Pentapetalae</taxon>
        <taxon>asterids</taxon>
        <taxon>Ericales</taxon>
        <taxon>Actinidiaceae</taxon>
        <taxon>Actinidia</taxon>
    </lineage>
</organism>
<feature type="chain" id="PRO_0000448076" description="Transcription factor BHLH42">
    <location>
        <begin position="1"/>
        <end position="689"/>
    </location>
</feature>
<feature type="domain" description="bHLH" evidence="1">
    <location>
        <begin position="483"/>
        <end position="532"/>
    </location>
</feature>
<feature type="region of interest" description="Disordered" evidence="2">
    <location>
        <begin position="192"/>
        <end position="287"/>
    </location>
</feature>
<feature type="region of interest" description="Disordered" evidence="2">
    <location>
        <begin position="458"/>
        <end position="489"/>
    </location>
</feature>
<feature type="region of interest" description="Basic motif" evidence="1">
    <location>
        <begin position="483"/>
        <end position="496"/>
    </location>
</feature>
<feature type="region of interest" description="Helix-loop-helix motif" evidence="1">
    <location>
        <begin position="497"/>
        <end position="532"/>
    </location>
</feature>
<feature type="region of interest" description="Disordered" evidence="2">
    <location>
        <begin position="547"/>
        <end position="570"/>
    </location>
</feature>
<feature type="compositionally biased region" description="Polar residues" evidence="2">
    <location>
        <begin position="206"/>
        <end position="217"/>
    </location>
</feature>
<feature type="compositionally biased region" description="Acidic residues" evidence="2">
    <location>
        <begin position="246"/>
        <end position="271"/>
    </location>
</feature>
<feature type="sequence conflict" description="In Ref. 1; QAT77714." evidence="5" ref="1">
    <original>Q</original>
    <variation>P</variation>
    <location>
        <position position="87"/>
    </location>
</feature>
<feature type="sequence conflict" description="In Ref. 1; QAT77714." evidence="5" ref="1">
    <original>E</original>
    <variation>D</variation>
    <location>
        <position position="256"/>
    </location>
</feature>
<feature type="sequence conflict" description="In Ref. 1; QAT77714." evidence="5" ref="1">
    <original>P</original>
    <variation>A</variation>
    <location>
        <position position="355"/>
    </location>
</feature>
<feature type="sequence conflict" description="In Ref. 1; QAT77714." evidence="5" ref="1">
    <original>E</original>
    <variation>D</variation>
    <location>
        <position position="376"/>
    </location>
</feature>
<keyword id="KW-0010">Activator</keyword>
<keyword id="KW-0238">DNA-binding</keyword>
<keyword id="KW-0539">Nucleus</keyword>
<keyword id="KW-1185">Reference proteome</keyword>
<keyword id="KW-0804">Transcription</keyword>
<keyword id="KW-0805">Transcription regulation</keyword>
<evidence type="ECO:0000255" key="1">
    <source>
        <dbReference type="PROSITE-ProRule" id="PRU00981"/>
    </source>
</evidence>
<evidence type="ECO:0000256" key="2">
    <source>
        <dbReference type="SAM" id="MobiDB-lite"/>
    </source>
</evidence>
<evidence type="ECO:0000269" key="3">
    <source>
    </source>
</evidence>
<evidence type="ECO:0000303" key="4">
    <source>
    </source>
</evidence>
<evidence type="ECO:0000305" key="5"/>
<evidence type="ECO:0000312" key="6">
    <source>
        <dbReference type="EMBL" id="PSS06386.1"/>
    </source>
</evidence>
<protein>
    <recommendedName>
        <fullName evidence="5">Transcription factor BHLH42</fullName>
    </recommendedName>
    <alternativeName>
        <fullName evidence="5">Basic helix-loop-helix protein 42</fullName>
        <shortName evidence="4">AcBHLH42</shortName>
    </alternativeName>
</protein>
<gene>
    <name evidence="4" type="primary">BHLH42</name>
    <name evidence="6" type="ORF">CEY00_Acc19563</name>
</gene>
<name>BHL42_ACTCC</name>